<keyword id="KW-0369">Histidine metabolism</keyword>
<keyword id="KW-0378">Hydrolase</keyword>
<keyword id="KW-0464">Manganese</keyword>
<keyword id="KW-0479">Metal-binding</keyword>
<sequence>MSQSDLHQQKFHWQGRHDAEDGKLGQRIHHVVKHQKTSELEKASQGVSILGFATDAGVARNKGRIGAKKAPDLIRRALANLAWHKDAPLYDLGTVVCDDDLLEESQSRCANLISEALPHTPTIVLGGGHEIAWASFSGLAEYFKTHHPEKKPKIGIINFDAHFDLRAFESSLADVKPSSGTPFNQIHHFCQRNDWAFHYACLGVSRSSNTQALFQKADELNVWYVEDSQLNYLNHSYHLTQLQHFIDDCDYLYLTIDLDVFPAATAPGVSAPAARGVSYDTIAPFLERILHYKNKLMLADIAEYNPNYDVDSQTARLAARLCWDIANAMADKEHKRQPIK</sequence>
<accession>Q87Q75</accession>
<evidence type="ECO:0000255" key="1">
    <source>
        <dbReference type="HAMAP-Rule" id="MF_00737"/>
    </source>
</evidence>
<proteinExistence type="inferred from homology"/>
<reference key="1">
    <citation type="journal article" date="2003" name="Lancet">
        <title>Genome sequence of Vibrio parahaemolyticus: a pathogenic mechanism distinct from that of V. cholerae.</title>
        <authorList>
            <person name="Makino K."/>
            <person name="Oshima K."/>
            <person name="Kurokawa K."/>
            <person name="Yokoyama K."/>
            <person name="Uda T."/>
            <person name="Tagomori K."/>
            <person name="Iijima Y."/>
            <person name="Najima M."/>
            <person name="Nakano M."/>
            <person name="Yamashita A."/>
            <person name="Kubota Y."/>
            <person name="Kimura S."/>
            <person name="Yasunaga T."/>
            <person name="Honda T."/>
            <person name="Shinagawa H."/>
            <person name="Hattori M."/>
            <person name="Iida T."/>
        </authorList>
    </citation>
    <scope>NUCLEOTIDE SEQUENCE [LARGE SCALE GENOMIC DNA]</scope>
    <source>
        <strain>RIMD 2210633</strain>
    </source>
</reference>
<protein>
    <recommendedName>
        <fullName evidence="1">Formimidoylglutamase</fullName>
        <ecNumber evidence="1">3.5.3.8</ecNumber>
    </recommendedName>
    <alternativeName>
        <fullName evidence="1">Formiminoglutamase</fullName>
    </alternativeName>
    <alternativeName>
        <fullName evidence="1">Formiminoglutamate hydrolase</fullName>
    </alternativeName>
</protein>
<comment type="function">
    <text evidence="1">Catalyzes the conversion of N-formimidoyl-L-glutamate to L-glutamate and formamide.</text>
</comment>
<comment type="catalytic activity">
    <reaction evidence="1">
        <text>N-formimidoyl-L-glutamate + H2O = formamide + L-glutamate</text>
        <dbReference type="Rhea" id="RHEA:22492"/>
        <dbReference type="ChEBI" id="CHEBI:15377"/>
        <dbReference type="ChEBI" id="CHEBI:16397"/>
        <dbReference type="ChEBI" id="CHEBI:29985"/>
        <dbReference type="ChEBI" id="CHEBI:58928"/>
        <dbReference type="EC" id="3.5.3.8"/>
    </reaction>
</comment>
<comment type="cofactor">
    <cofactor evidence="1">
        <name>Mn(2+)</name>
        <dbReference type="ChEBI" id="CHEBI:29035"/>
    </cofactor>
    <text evidence="1">Binds 2 manganese ions per subunit.</text>
</comment>
<comment type="pathway">
    <text evidence="1">Amino-acid degradation; L-histidine degradation into L-glutamate; L-glutamate from N-formimidoyl-L-glutamate (hydrolase route): step 1/1.</text>
</comment>
<comment type="similarity">
    <text evidence="1">Belongs to the arginase family.</text>
</comment>
<name>HUTG_VIBPA</name>
<gene>
    <name evidence="1" type="primary">hutG</name>
    <name type="ordered locus">VP1275</name>
</gene>
<feature type="chain" id="PRO_0000173780" description="Formimidoylglutamase">
    <location>
        <begin position="1"/>
        <end position="340"/>
    </location>
</feature>
<feature type="binding site" evidence="1">
    <location>
        <position position="129"/>
    </location>
    <ligand>
        <name>Mn(2+)</name>
        <dbReference type="ChEBI" id="CHEBI:29035"/>
        <label>1</label>
    </ligand>
</feature>
<feature type="binding site" evidence="1">
    <location>
        <position position="160"/>
    </location>
    <ligand>
        <name>Mn(2+)</name>
        <dbReference type="ChEBI" id="CHEBI:29035"/>
        <label>1</label>
    </ligand>
</feature>
<feature type="binding site" evidence="1">
    <location>
        <position position="160"/>
    </location>
    <ligand>
        <name>Mn(2+)</name>
        <dbReference type="ChEBI" id="CHEBI:29035"/>
        <label>2</label>
    </ligand>
</feature>
<feature type="binding site" evidence="1">
    <location>
        <position position="162"/>
    </location>
    <ligand>
        <name>Mn(2+)</name>
        <dbReference type="ChEBI" id="CHEBI:29035"/>
        <label>2</label>
    </ligand>
</feature>
<feature type="binding site" evidence="1">
    <location>
        <position position="164"/>
    </location>
    <ligand>
        <name>Mn(2+)</name>
        <dbReference type="ChEBI" id="CHEBI:29035"/>
        <label>1</label>
    </ligand>
</feature>
<feature type="binding site" evidence="1">
    <location>
        <position position="257"/>
    </location>
    <ligand>
        <name>Mn(2+)</name>
        <dbReference type="ChEBI" id="CHEBI:29035"/>
        <label>1</label>
    </ligand>
</feature>
<feature type="binding site" evidence="1">
    <location>
        <position position="257"/>
    </location>
    <ligand>
        <name>Mn(2+)</name>
        <dbReference type="ChEBI" id="CHEBI:29035"/>
        <label>2</label>
    </ligand>
</feature>
<feature type="binding site" evidence="1">
    <location>
        <position position="259"/>
    </location>
    <ligand>
        <name>Mn(2+)</name>
        <dbReference type="ChEBI" id="CHEBI:29035"/>
        <label>2</label>
    </ligand>
</feature>
<organism>
    <name type="scientific">Vibrio parahaemolyticus serotype O3:K6 (strain RIMD 2210633)</name>
    <dbReference type="NCBI Taxonomy" id="223926"/>
    <lineage>
        <taxon>Bacteria</taxon>
        <taxon>Pseudomonadati</taxon>
        <taxon>Pseudomonadota</taxon>
        <taxon>Gammaproteobacteria</taxon>
        <taxon>Vibrionales</taxon>
        <taxon>Vibrionaceae</taxon>
        <taxon>Vibrio</taxon>
    </lineage>
</organism>
<dbReference type="EC" id="3.5.3.8" evidence="1"/>
<dbReference type="EMBL" id="BA000031">
    <property type="protein sequence ID" value="BAC59538.1"/>
    <property type="molecule type" value="Genomic_DNA"/>
</dbReference>
<dbReference type="RefSeq" id="NP_797654.1">
    <property type="nucleotide sequence ID" value="NC_004603.1"/>
</dbReference>
<dbReference type="RefSeq" id="WP_005483530.1">
    <property type="nucleotide sequence ID" value="NC_004603.1"/>
</dbReference>
<dbReference type="SMR" id="Q87Q75"/>
<dbReference type="GeneID" id="1188780"/>
<dbReference type="KEGG" id="vpa:VP1275"/>
<dbReference type="PATRIC" id="fig|223926.6.peg.1215"/>
<dbReference type="eggNOG" id="COG0010">
    <property type="taxonomic scope" value="Bacteria"/>
</dbReference>
<dbReference type="HOGENOM" id="CLU_039478_2_0_6"/>
<dbReference type="UniPathway" id="UPA00379">
    <property type="reaction ID" value="UER00552"/>
</dbReference>
<dbReference type="Proteomes" id="UP000002493">
    <property type="component" value="Chromosome 1"/>
</dbReference>
<dbReference type="GO" id="GO:0008783">
    <property type="term" value="F:agmatinase activity"/>
    <property type="evidence" value="ECO:0007669"/>
    <property type="project" value="TreeGrafter"/>
</dbReference>
<dbReference type="GO" id="GO:0050415">
    <property type="term" value="F:formimidoylglutamase activity"/>
    <property type="evidence" value="ECO:0007669"/>
    <property type="project" value="UniProtKB-UniRule"/>
</dbReference>
<dbReference type="GO" id="GO:0030145">
    <property type="term" value="F:manganese ion binding"/>
    <property type="evidence" value="ECO:0007669"/>
    <property type="project" value="UniProtKB-UniRule"/>
</dbReference>
<dbReference type="GO" id="GO:0019556">
    <property type="term" value="P:L-histidine catabolic process to glutamate and formamide"/>
    <property type="evidence" value="ECO:0007669"/>
    <property type="project" value="UniProtKB-UniPathway"/>
</dbReference>
<dbReference type="GO" id="GO:0019557">
    <property type="term" value="P:L-histidine catabolic process to glutamate and formate"/>
    <property type="evidence" value="ECO:0007669"/>
    <property type="project" value="UniProtKB-UniPathway"/>
</dbReference>
<dbReference type="GO" id="GO:0033389">
    <property type="term" value="P:putrescine biosynthetic process from arginine, via agmatine"/>
    <property type="evidence" value="ECO:0007669"/>
    <property type="project" value="TreeGrafter"/>
</dbReference>
<dbReference type="CDD" id="cd09988">
    <property type="entry name" value="Formimidoylglutamase"/>
    <property type="match status" value="1"/>
</dbReference>
<dbReference type="Gene3D" id="3.40.800.10">
    <property type="entry name" value="Ureohydrolase domain"/>
    <property type="match status" value="1"/>
</dbReference>
<dbReference type="HAMAP" id="MF_00737">
    <property type="entry name" value="Formimidoylglutam"/>
    <property type="match status" value="1"/>
</dbReference>
<dbReference type="InterPro" id="IPR005923">
    <property type="entry name" value="HutG"/>
</dbReference>
<dbReference type="InterPro" id="IPR006035">
    <property type="entry name" value="Ureohydrolase"/>
</dbReference>
<dbReference type="InterPro" id="IPR023696">
    <property type="entry name" value="Ureohydrolase_dom_sf"/>
</dbReference>
<dbReference type="InterPro" id="IPR020855">
    <property type="entry name" value="Ureohydrolase_Mn_BS"/>
</dbReference>
<dbReference type="NCBIfam" id="TIGR01227">
    <property type="entry name" value="hutG"/>
    <property type="match status" value="1"/>
</dbReference>
<dbReference type="PANTHER" id="PTHR11358">
    <property type="entry name" value="ARGINASE/AGMATINASE"/>
    <property type="match status" value="1"/>
</dbReference>
<dbReference type="PANTHER" id="PTHR11358:SF35">
    <property type="entry name" value="FORMIMIDOYLGLUTAMASE"/>
    <property type="match status" value="1"/>
</dbReference>
<dbReference type="Pfam" id="PF00491">
    <property type="entry name" value="Arginase"/>
    <property type="match status" value="1"/>
</dbReference>
<dbReference type="PIRSF" id="PIRSF036979">
    <property type="entry name" value="Arginase"/>
    <property type="match status" value="1"/>
</dbReference>
<dbReference type="PRINTS" id="PR00116">
    <property type="entry name" value="ARGINASE"/>
</dbReference>
<dbReference type="SUPFAM" id="SSF52768">
    <property type="entry name" value="Arginase/deacetylase"/>
    <property type="match status" value="1"/>
</dbReference>
<dbReference type="PROSITE" id="PS01053">
    <property type="entry name" value="ARGINASE_1"/>
    <property type="match status" value="1"/>
</dbReference>
<dbReference type="PROSITE" id="PS51409">
    <property type="entry name" value="ARGINASE_2"/>
    <property type="match status" value="1"/>
</dbReference>